<protein>
    <recommendedName>
        <fullName evidence="1">Probable phosphatase VIBHAR_04983</fullName>
        <ecNumber evidence="1">3.1.3.-</ecNumber>
    </recommendedName>
</protein>
<organism>
    <name type="scientific">Vibrio campbellii (strain ATCC BAA-1116)</name>
    <dbReference type="NCBI Taxonomy" id="2902295"/>
    <lineage>
        <taxon>Bacteria</taxon>
        <taxon>Pseudomonadati</taxon>
        <taxon>Pseudomonadota</taxon>
        <taxon>Gammaproteobacteria</taxon>
        <taxon>Vibrionales</taxon>
        <taxon>Vibrionaceae</taxon>
        <taxon>Vibrio</taxon>
    </lineage>
</organism>
<feature type="chain" id="PRO_0000318625" description="Probable phosphatase VIBHAR_04983">
    <location>
        <begin position="1"/>
        <end position="250"/>
    </location>
</feature>
<feature type="binding site" evidence="1">
    <location>
        <position position="8"/>
    </location>
    <ligand>
        <name>Zn(2+)</name>
        <dbReference type="ChEBI" id="CHEBI:29105"/>
        <label>1</label>
    </ligand>
</feature>
<feature type="binding site" evidence="1">
    <location>
        <position position="10"/>
    </location>
    <ligand>
        <name>Zn(2+)</name>
        <dbReference type="ChEBI" id="CHEBI:29105"/>
        <label>1</label>
    </ligand>
</feature>
<feature type="binding site" evidence="1">
    <location>
        <position position="16"/>
    </location>
    <ligand>
        <name>Zn(2+)</name>
        <dbReference type="ChEBI" id="CHEBI:29105"/>
        <label>2</label>
    </ligand>
</feature>
<feature type="binding site" evidence="1">
    <location>
        <position position="41"/>
    </location>
    <ligand>
        <name>Zn(2+)</name>
        <dbReference type="ChEBI" id="CHEBI:29105"/>
        <label>2</label>
    </ligand>
</feature>
<feature type="binding site" evidence="1">
    <location>
        <position position="74"/>
    </location>
    <ligand>
        <name>Zn(2+)</name>
        <dbReference type="ChEBI" id="CHEBI:29105"/>
        <label>1</label>
    </ligand>
</feature>
<feature type="binding site" evidence="1">
    <location>
        <position position="74"/>
    </location>
    <ligand>
        <name>Zn(2+)</name>
        <dbReference type="ChEBI" id="CHEBI:29105"/>
        <label>3</label>
    </ligand>
</feature>
<feature type="binding site" evidence="1">
    <location>
        <position position="102"/>
    </location>
    <ligand>
        <name>Zn(2+)</name>
        <dbReference type="ChEBI" id="CHEBI:29105"/>
        <label>3</label>
    </ligand>
</feature>
<feature type="binding site" evidence="1">
    <location>
        <position position="132"/>
    </location>
    <ligand>
        <name>Zn(2+)</name>
        <dbReference type="ChEBI" id="CHEBI:29105"/>
        <label>3</label>
    </ligand>
</feature>
<feature type="binding site" evidence="1">
    <location>
        <position position="194"/>
    </location>
    <ligand>
        <name>Zn(2+)</name>
        <dbReference type="ChEBI" id="CHEBI:29105"/>
        <label>1</label>
    </ligand>
</feature>
<feature type="binding site" evidence="1">
    <location>
        <position position="196"/>
    </location>
    <ligand>
        <name>Zn(2+)</name>
        <dbReference type="ChEBI" id="CHEBI:29105"/>
        <label>2</label>
    </ligand>
</feature>
<keyword id="KW-0378">Hydrolase</keyword>
<keyword id="KW-0479">Metal-binding</keyword>
<keyword id="KW-0862">Zinc</keyword>
<comment type="cofactor">
    <cofactor evidence="1">
        <name>Zn(2+)</name>
        <dbReference type="ChEBI" id="CHEBI:29105"/>
    </cofactor>
    <text evidence="1">Binds 3 Zn(2+) ions per subunit.</text>
</comment>
<comment type="similarity">
    <text evidence="1">Belongs to the PHP family.</text>
</comment>
<comment type="sequence caution" evidence="2">
    <conflict type="erroneous initiation">
        <sequence resource="EMBL-CDS" id="ABU72891"/>
    </conflict>
</comment>
<gene>
    <name type="ordered locus">VIBHAR_04983</name>
</gene>
<evidence type="ECO:0000255" key="1">
    <source>
        <dbReference type="HAMAP-Rule" id="MF_01561"/>
    </source>
</evidence>
<evidence type="ECO:0000305" key="2"/>
<proteinExistence type="inferred from homology"/>
<sequence>MELKVDTHTHTYASGHAYSTLIENAKSAKENGLDMFCTTDHAESMPGAPHYWFFSNQKILPRFLEGVAIIRGVESNIMNTQGDIDIPESVDRNLDWVIASFHEPVFRPADSATHTEALLNIIKNGRVDALGHLGNPNFDFDFEVVLKCAKEHYVAIEINNTTLKGNSRVGSVDRCHQIAQIGKDLGVFFTTGSDAHFCHDVGNLSLVSELMDRVGIDSSKVITHSAQQFLAFLELRGRKPIAEYDEIRNA</sequence>
<reference key="1">
    <citation type="submission" date="2007-08" db="EMBL/GenBank/DDBJ databases">
        <authorList>
            <consortium name="The Vibrio harveyi Genome Sequencing Project"/>
            <person name="Bassler B."/>
            <person name="Clifton S.W."/>
            <person name="Fulton L."/>
            <person name="Delehaunty K."/>
            <person name="Fronick C."/>
            <person name="Harrison M."/>
            <person name="Markivic C."/>
            <person name="Fulton R."/>
            <person name="Tin-Wollam A.-M."/>
            <person name="Shah N."/>
            <person name="Pepin K."/>
            <person name="Nash W."/>
            <person name="Thiruvilangam P."/>
            <person name="Bhonagiri V."/>
            <person name="Waters C."/>
            <person name="Tu K.C."/>
            <person name="Irgon J."/>
            <person name="Wilson R.K."/>
        </authorList>
    </citation>
    <scope>NUCLEOTIDE SEQUENCE [LARGE SCALE GENOMIC DNA]</scope>
    <source>
        <strain>ATCC BAA-1116 / BB120</strain>
    </source>
</reference>
<dbReference type="EC" id="3.1.3.-" evidence="1"/>
<dbReference type="EMBL" id="CP000790">
    <property type="protein sequence ID" value="ABU72891.1"/>
    <property type="status" value="ALT_INIT"/>
    <property type="molecule type" value="Genomic_DNA"/>
</dbReference>
<dbReference type="RefSeq" id="WP_048814362.1">
    <property type="nucleotide sequence ID" value="NC_009784.1"/>
</dbReference>
<dbReference type="SMR" id="A7N3D6"/>
<dbReference type="KEGG" id="vha:VIBHAR_04983"/>
<dbReference type="PATRIC" id="fig|338187.36.peg.3866"/>
<dbReference type="Proteomes" id="UP000008152">
    <property type="component" value="Chromosome II"/>
</dbReference>
<dbReference type="GO" id="GO:0005829">
    <property type="term" value="C:cytosol"/>
    <property type="evidence" value="ECO:0007669"/>
    <property type="project" value="TreeGrafter"/>
</dbReference>
<dbReference type="GO" id="GO:0016791">
    <property type="term" value="F:phosphatase activity"/>
    <property type="evidence" value="ECO:0007669"/>
    <property type="project" value="UniProtKB-UniRule"/>
</dbReference>
<dbReference type="GO" id="GO:0008270">
    <property type="term" value="F:zinc ion binding"/>
    <property type="evidence" value="ECO:0007669"/>
    <property type="project" value="UniProtKB-UniRule"/>
</dbReference>
<dbReference type="GO" id="GO:0071978">
    <property type="term" value="P:bacterial-type flagellum-dependent swarming motility"/>
    <property type="evidence" value="ECO:0007669"/>
    <property type="project" value="TreeGrafter"/>
</dbReference>
<dbReference type="CDD" id="cd07437">
    <property type="entry name" value="PHP_HisPPase_Ycdx_like"/>
    <property type="match status" value="1"/>
</dbReference>
<dbReference type="Gene3D" id="3.20.20.140">
    <property type="entry name" value="Metal-dependent hydrolases"/>
    <property type="match status" value="1"/>
</dbReference>
<dbReference type="HAMAP" id="MF_01561">
    <property type="entry name" value="YcdX_phosphat"/>
    <property type="match status" value="1"/>
</dbReference>
<dbReference type="InterPro" id="IPR023710">
    <property type="entry name" value="Phosphatase_YcdX_put"/>
</dbReference>
<dbReference type="InterPro" id="IPR004013">
    <property type="entry name" value="PHP_dom"/>
</dbReference>
<dbReference type="InterPro" id="IPR050243">
    <property type="entry name" value="PHP_phosphatase"/>
</dbReference>
<dbReference type="InterPro" id="IPR003141">
    <property type="entry name" value="Pol/His_phosphatase_N"/>
</dbReference>
<dbReference type="InterPro" id="IPR016195">
    <property type="entry name" value="Pol/histidinol_Pase-like"/>
</dbReference>
<dbReference type="NCBIfam" id="NF006702">
    <property type="entry name" value="PRK09248.1"/>
    <property type="match status" value="1"/>
</dbReference>
<dbReference type="PANTHER" id="PTHR36928">
    <property type="entry name" value="PHOSPHATASE YCDX-RELATED"/>
    <property type="match status" value="1"/>
</dbReference>
<dbReference type="PANTHER" id="PTHR36928:SF1">
    <property type="entry name" value="PHOSPHATASE YCDX-RELATED"/>
    <property type="match status" value="1"/>
</dbReference>
<dbReference type="Pfam" id="PF02811">
    <property type="entry name" value="PHP"/>
    <property type="match status" value="1"/>
</dbReference>
<dbReference type="SMART" id="SM00481">
    <property type="entry name" value="POLIIIAc"/>
    <property type="match status" value="1"/>
</dbReference>
<dbReference type="SUPFAM" id="SSF89550">
    <property type="entry name" value="PHP domain-like"/>
    <property type="match status" value="1"/>
</dbReference>
<accession>A7N3D6</accession>
<name>Y4983_VIBC1</name>